<dbReference type="EC" id="4.2.2.-" evidence="1"/>
<dbReference type="EMBL" id="AE005174">
    <property type="protein sequence ID" value="AAG54967.1"/>
    <property type="molecule type" value="Genomic_DNA"/>
</dbReference>
<dbReference type="EMBL" id="BA000007">
    <property type="protein sequence ID" value="BAB34094.1"/>
    <property type="molecule type" value="Genomic_DNA"/>
</dbReference>
<dbReference type="PIR" id="C85563">
    <property type="entry name" value="C85563"/>
</dbReference>
<dbReference type="PIR" id="G90712">
    <property type="entry name" value="G90712"/>
</dbReference>
<dbReference type="RefSeq" id="NP_308698.1">
    <property type="nucleotide sequence ID" value="NC_002695.1"/>
</dbReference>
<dbReference type="RefSeq" id="WP_001231402.1">
    <property type="nucleotide sequence ID" value="NZ_VOAI01000012.1"/>
</dbReference>
<dbReference type="SMR" id="Q8XBQ1"/>
<dbReference type="STRING" id="155864.Z0778"/>
<dbReference type="GeneID" id="917032"/>
<dbReference type="KEGG" id="ece:Z0778"/>
<dbReference type="KEGG" id="ecs:ECs_0671"/>
<dbReference type="PATRIC" id="fig|386585.9.peg.783"/>
<dbReference type="eggNOG" id="COG0797">
    <property type="taxonomic scope" value="Bacteria"/>
</dbReference>
<dbReference type="HOGENOM" id="CLU_042923_3_0_6"/>
<dbReference type="OMA" id="PFYSDRI"/>
<dbReference type="Proteomes" id="UP000000558">
    <property type="component" value="Chromosome"/>
</dbReference>
<dbReference type="Proteomes" id="UP000002519">
    <property type="component" value="Chromosome"/>
</dbReference>
<dbReference type="GO" id="GO:0009279">
    <property type="term" value="C:cell outer membrane"/>
    <property type="evidence" value="ECO:0007669"/>
    <property type="project" value="TreeGrafter"/>
</dbReference>
<dbReference type="GO" id="GO:0005886">
    <property type="term" value="C:plasma membrane"/>
    <property type="evidence" value="ECO:0007669"/>
    <property type="project" value="UniProtKB-SubCell"/>
</dbReference>
<dbReference type="GO" id="GO:0008932">
    <property type="term" value="F:lytic endotransglycosylase activity"/>
    <property type="evidence" value="ECO:0007669"/>
    <property type="project" value="UniProtKB-UniRule"/>
</dbReference>
<dbReference type="GO" id="GO:0042834">
    <property type="term" value="F:peptidoglycan binding"/>
    <property type="evidence" value="ECO:0007669"/>
    <property type="project" value="InterPro"/>
</dbReference>
<dbReference type="GO" id="GO:0071555">
    <property type="term" value="P:cell wall organization"/>
    <property type="evidence" value="ECO:0007669"/>
    <property type="project" value="UniProtKB-KW"/>
</dbReference>
<dbReference type="GO" id="GO:0000270">
    <property type="term" value="P:peptidoglycan metabolic process"/>
    <property type="evidence" value="ECO:0007669"/>
    <property type="project" value="UniProtKB-UniRule"/>
</dbReference>
<dbReference type="CDD" id="cd22268">
    <property type="entry name" value="DPBB_RlpA-like"/>
    <property type="match status" value="1"/>
</dbReference>
<dbReference type="FunFam" id="2.40.40.10:FF:000003">
    <property type="entry name" value="Endolytic peptidoglycan transglycosylase RlpA"/>
    <property type="match status" value="1"/>
</dbReference>
<dbReference type="FunFam" id="3.30.70.1070:FF:000003">
    <property type="entry name" value="Endolytic peptidoglycan transglycosylase RlpA"/>
    <property type="match status" value="1"/>
</dbReference>
<dbReference type="Gene3D" id="2.40.40.10">
    <property type="entry name" value="RlpA-like domain"/>
    <property type="match status" value="1"/>
</dbReference>
<dbReference type="Gene3D" id="3.30.70.1070">
    <property type="entry name" value="Sporulation related repeat"/>
    <property type="match status" value="1"/>
</dbReference>
<dbReference type="HAMAP" id="MF_02071">
    <property type="entry name" value="RlpA"/>
    <property type="match status" value="1"/>
</dbReference>
<dbReference type="InterPro" id="IPR034718">
    <property type="entry name" value="RlpA"/>
</dbReference>
<dbReference type="InterPro" id="IPR009009">
    <property type="entry name" value="RlpA-like_DPBB"/>
</dbReference>
<dbReference type="InterPro" id="IPR036908">
    <property type="entry name" value="RlpA-like_sf"/>
</dbReference>
<dbReference type="InterPro" id="IPR012997">
    <property type="entry name" value="RplA"/>
</dbReference>
<dbReference type="InterPro" id="IPR007730">
    <property type="entry name" value="SPOR-like_dom"/>
</dbReference>
<dbReference type="InterPro" id="IPR036680">
    <property type="entry name" value="SPOR-like_sf"/>
</dbReference>
<dbReference type="NCBIfam" id="NF007953">
    <property type="entry name" value="PRK10672.1"/>
    <property type="match status" value="1"/>
</dbReference>
<dbReference type="NCBIfam" id="TIGR00413">
    <property type="entry name" value="rlpA"/>
    <property type="match status" value="1"/>
</dbReference>
<dbReference type="PANTHER" id="PTHR34183">
    <property type="entry name" value="ENDOLYTIC PEPTIDOGLYCAN TRANSGLYCOSYLASE RLPA"/>
    <property type="match status" value="1"/>
</dbReference>
<dbReference type="PANTHER" id="PTHR34183:SF1">
    <property type="entry name" value="ENDOLYTIC PEPTIDOGLYCAN TRANSGLYCOSYLASE RLPA"/>
    <property type="match status" value="1"/>
</dbReference>
<dbReference type="Pfam" id="PF03330">
    <property type="entry name" value="DPBB_1"/>
    <property type="match status" value="1"/>
</dbReference>
<dbReference type="Pfam" id="PF05036">
    <property type="entry name" value="SPOR"/>
    <property type="match status" value="1"/>
</dbReference>
<dbReference type="SUPFAM" id="SSF50685">
    <property type="entry name" value="Barwin-like endoglucanases"/>
    <property type="match status" value="1"/>
</dbReference>
<dbReference type="SUPFAM" id="SSF110997">
    <property type="entry name" value="Sporulation related repeat"/>
    <property type="match status" value="1"/>
</dbReference>
<dbReference type="PROSITE" id="PS51257">
    <property type="entry name" value="PROKAR_LIPOPROTEIN"/>
    <property type="match status" value="1"/>
</dbReference>
<dbReference type="PROSITE" id="PS51724">
    <property type="entry name" value="SPOR"/>
    <property type="match status" value="1"/>
</dbReference>
<protein>
    <recommendedName>
        <fullName evidence="1">Endolytic peptidoglycan transglycosylase RlpA</fullName>
        <ecNumber evidence="1">4.2.2.-</ecNumber>
    </recommendedName>
    <alternativeName>
        <fullName>Rare lipoprotein A</fullName>
    </alternativeName>
</protein>
<organism>
    <name type="scientific">Escherichia coli O157:H7</name>
    <dbReference type="NCBI Taxonomy" id="83334"/>
    <lineage>
        <taxon>Bacteria</taxon>
        <taxon>Pseudomonadati</taxon>
        <taxon>Pseudomonadota</taxon>
        <taxon>Gammaproteobacteria</taxon>
        <taxon>Enterobacterales</taxon>
        <taxon>Enterobacteriaceae</taxon>
        <taxon>Escherichia</taxon>
    </lineage>
</organism>
<name>RLPA_ECO57</name>
<sequence>MRKQWLGICIAAGMLAACTSDDGQQQTVSVPQPAVCNGPIVEISGADPRFEPLNATANQDYQRDGKSYKIVQDPSRFIQAGLAAIYDAEPGSNLTASGEAFDPTQLTAAHPTLPIPSYARITNLANGRMIVVRINDRGPYGNDRVISLSRAAADRLNTSNNTKVRIDPIIVAQDGSLSGPGMACTTVAKQTYALPAPPDLSGGAGTSSVSGPQGDILPVSNSTLKSEDPTGAPVTSSGFLGAPTTLAPGVLEGSEPTPAPQPVVTAPSTTPATSPAMVTPQAASQSASGNFMVQVGAVSDQARAQQYQQQLGQKFGVPGRVTQNGAVWRIQLGPFANKAEASTLQQRLQTEAQLQSFITTAQ</sequence>
<proteinExistence type="inferred from homology"/>
<evidence type="ECO:0000255" key="1">
    <source>
        <dbReference type="HAMAP-Rule" id="MF_02071"/>
    </source>
</evidence>
<evidence type="ECO:0000256" key="2">
    <source>
        <dbReference type="SAM" id="MobiDB-lite"/>
    </source>
</evidence>
<accession>Q8XBQ1</accession>
<gene>
    <name evidence="1" type="primary">rlpA</name>
    <name type="ordered locus">Z0778</name>
    <name type="ordered locus">ECs0671</name>
</gene>
<keyword id="KW-1003">Cell membrane</keyword>
<keyword id="KW-0961">Cell wall biogenesis/degradation</keyword>
<keyword id="KW-0449">Lipoprotein</keyword>
<keyword id="KW-0456">Lyase</keyword>
<keyword id="KW-0472">Membrane</keyword>
<keyword id="KW-0564">Palmitate</keyword>
<keyword id="KW-1185">Reference proteome</keyword>
<keyword id="KW-0732">Signal</keyword>
<feature type="signal peptide" evidence="1">
    <location>
        <begin position="1"/>
        <end position="17"/>
    </location>
</feature>
<feature type="chain" id="PRO_0000030797" description="Endolytic peptidoglycan transglycosylase RlpA" evidence="1">
    <location>
        <begin position="18"/>
        <end position="362"/>
    </location>
</feature>
<feature type="domain" description="SPOR" evidence="1">
    <location>
        <begin position="285"/>
        <end position="361"/>
    </location>
</feature>
<feature type="region of interest" description="Disordered" evidence="2">
    <location>
        <begin position="198"/>
        <end position="276"/>
    </location>
</feature>
<feature type="compositionally biased region" description="Low complexity" evidence="2">
    <location>
        <begin position="262"/>
        <end position="276"/>
    </location>
</feature>
<feature type="lipid moiety-binding region" description="N-palmitoyl cysteine" evidence="1">
    <location>
        <position position="18"/>
    </location>
</feature>
<feature type="lipid moiety-binding region" description="S-diacylglycerol cysteine" evidence="1">
    <location>
        <position position="18"/>
    </location>
</feature>
<comment type="function">
    <text evidence="1">Lytic transglycosylase with a strong preference for naked glycan strands that lack stem peptides.</text>
</comment>
<comment type="subcellular location">
    <subcellularLocation>
        <location evidence="1">Cell membrane</location>
        <topology evidence="1">Lipid-anchor</topology>
    </subcellularLocation>
</comment>
<comment type="similarity">
    <text evidence="1">Belongs to the RlpA family.</text>
</comment>
<reference key="1">
    <citation type="journal article" date="2001" name="Nature">
        <title>Genome sequence of enterohaemorrhagic Escherichia coli O157:H7.</title>
        <authorList>
            <person name="Perna N.T."/>
            <person name="Plunkett G. III"/>
            <person name="Burland V."/>
            <person name="Mau B."/>
            <person name="Glasner J.D."/>
            <person name="Rose D.J."/>
            <person name="Mayhew G.F."/>
            <person name="Evans P.S."/>
            <person name="Gregor J."/>
            <person name="Kirkpatrick H.A."/>
            <person name="Posfai G."/>
            <person name="Hackett J."/>
            <person name="Klink S."/>
            <person name="Boutin A."/>
            <person name="Shao Y."/>
            <person name="Miller L."/>
            <person name="Grotbeck E.J."/>
            <person name="Davis N.W."/>
            <person name="Lim A."/>
            <person name="Dimalanta E.T."/>
            <person name="Potamousis K."/>
            <person name="Apodaca J."/>
            <person name="Anantharaman T.S."/>
            <person name="Lin J."/>
            <person name="Yen G."/>
            <person name="Schwartz D.C."/>
            <person name="Welch R.A."/>
            <person name="Blattner F.R."/>
        </authorList>
    </citation>
    <scope>NUCLEOTIDE SEQUENCE [LARGE SCALE GENOMIC DNA]</scope>
    <source>
        <strain>O157:H7 / EDL933 / ATCC 700927 / EHEC</strain>
    </source>
</reference>
<reference key="2">
    <citation type="journal article" date="2001" name="DNA Res.">
        <title>Complete genome sequence of enterohemorrhagic Escherichia coli O157:H7 and genomic comparison with a laboratory strain K-12.</title>
        <authorList>
            <person name="Hayashi T."/>
            <person name="Makino K."/>
            <person name="Ohnishi M."/>
            <person name="Kurokawa K."/>
            <person name="Ishii K."/>
            <person name="Yokoyama K."/>
            <person name="Han C.-G."/>
            <person name="Ohtsubo E."/>
            <person name="Nakayama K."/>
            <person name="Murata T."/>
            <person name="Tanaka M."/>
            <person name="Tobe T."/>
            <person name="Iida T."/>
            <person name="Takami H."/>
            <person name="Honda T."/>
            <person name="Sasakawa C."/>
            <person name="Ogasawara N."/>
            <person name="Yasunaga T."/>
            <person name="Kuhara S."/>
            <person name="Shiba T."/>
            <person name="Hattori M."/>
            <person name="Shinagawa H."/>
        </authorList>
    </citation>
    <scope>NUCLEOTIDE SEQUENCE [LARGE SCALE GENOMIC DNA]</scope>
    <source>
        <strain>O157:H7 / Sakai / RIMD 0509952 / EHEC</strain>
    </source>
</reference>